<comment type="function">
    <text>Can catalyze the hydrolysis of ATP in the presence of single-stranded DNA, the ATP-dependent uptake of single-stranded DNA by duplex DNA, and the ATP-dependent hybridization of homologous single-stranded DNAs. It interacts with LexA causing its activation and leading to its autocatalytic cleavage.</text>
</comment>
<comment type="subcellular location">
    <subcellularLocation>
        <location evidence="1">Cytoplasm</location>
    </subcellularLocation>
</comment>
<comment type="similarity">
    <text evidence="1">Belongs to the RecA family.</text>
</comment>
<comment type="sequence caution" evidence="2">
    <conflict type="erroneous initiation">
        <sequence resource="EMBL-CDS" id="ABA79624"/>
    </conflict>
</comment>
<gene>
    <name evidence="1" type="primary">recA</name>
    <name type="ordered locus">RHOS4_20560</name>
    <name type="ORF">RSP_0452</name>
</gene>
<accession>P32725</accession>
<accession>Q3J0R0</accession>
<name>RECA_CERS4</name>
<keyword id="KW-0067">ATP-binding</keyword>
<keyword id="KW-0963">Cytoplasm</keyword>
<keyword id="KW-0227">DNA damage</keyword>
<keyword id="KW-0233">DNA recombination</keyword>
<keyword id="KW-0234">DNA repair</keyword>
<keyword id="KW-0238">DNA-binding</keyword>
<keyword id="KW-0547">Nucleotide-binding</keyword>
<keyword id="KW-1185">Reference proteome</keyword>
<keyword id="KW-0742">SOS response</keyword>
<sequence>MDKAKALESALAQIERQFGKGSIMKLGANSPVMEIEATSTGSLGLDIALGIGGLPKGRIIEIYGPESSGKTTLTLHVVAEEQKKGGVCAFVDAEHALDPQYAKKLGVNLDELLISQPDTGEQALEIVDTLVRSGAVNLIVVDSVAALTPKSEIEGDMGDMQMGSQARLMSQAMRKLTASIGRSNCMVIFINQIRMKIGVMFGNPETTTGGNALKFYASVRLDIRRTGAIKDRDNVIGNTTKVKVVKNKVAPPFREVEFDIMYGEGISKTGELVDLGVKAGVVEKSGSWYSYGDERIGQGRENAKAFLRANPTVAGDIEDRIRASHGLDFSTGEDGKGDDLVDM</sequence>
<proteinExistence type="inferred from homology"/>
<reference key="1">
    <citation type="journal article" date="1994" name="Mol. Gen. Genet.">
        <title>Molecular cloning, sequence and regulation of expression of the recA gene of the phototrophic bacterium Rhodobacter sphaeroides.</title>
        <authorList>
            <person name="Calero S."/>
            <person name="Fernandez de Henestrosa A.R."/>
            <person name="Barbe J."/>
        </authorList>
    </citation>
    <scope>NUCLEOTIDE SEQUENCE [GENOMIC DNA]</scope>
</reference>
<reference key="2">
    <citation type="submission" date="2005-09" db="EMBL/GenBank/DDBJ databases">
        <title>Complete sequence of chromosome 1 of Rhodobacter sphaeroides 2.4.1.</title>
        <authorList>
            <person name="Copeland A."/>
            <person name="Lucas S."/>
            <person name="Lapidus A."/>
            <person name="Barry K."/>
            <person name="Detter J.C."/>
            <person name="Glavina T."/>
            <person name="Hammon N."/>
            <person name="Israni S."/>
            <person name="Pitluck S."/>
            <person name="Richardson P."/>
            <person name="Mackenzie C."/>
            <person name="Choudhary M."/>
            <person name="Larimer F."/>
            <person name="Hauser L.J."/>
            <person name="Land M."/>
            <person name="Donohue T.J."/>
            <person name="Kaplan S."/>
        </authorList>
    </citation>
    <scope>NUCLEOTIDE SEQUENCE [LARGE SCALE GENOMIC DNA]</scope>
    <source>
        <strain>ATCC 17023 / DSM 158 / JCM 6121 / CCUG 31486 / LMG 2827 / NBRC 12203 / NCIMB 8253 / ATH 2.4.1.</strain>
    </source>
</reference>
<protein>
    <recommendedName>
        <fullName evidence="1">Protein RecA</fullName>
    </recommendedName>
    <alternativeName>
        <fullName evidence="1">Recombinase A</fullName>
    </alternativeName>
</protein>
<feature type="chain" id="PRO_0000122819" description="Protein RecA">
    <location>
        <begin position="1"/>
        <end position="343"/>
    </location>
</feature>
<feature type="binding site" evidence="1">
    <location>
        <begin position="64"/>
        <end position="71"/>
    </location>
    <ligand>
        <name>ATP</name>
        <dbReference type="ChEBI" id="CHEBI:30616"/>
    </ligand>
</feature>
<organism>
    <name type="scientific">Cereibacter sphaeroides (strain ATCC 17023 / DSM 158 / JCM 6121 / CCUG 31486 / LMG 2827 / NBRC 12203 / NCIMB 8253 / ATH 2.4.1.)</name>
    <name type="common">Rhodobacter sphaeroides</name>
    <dbReference type="NCBI Taxonomy" id="272943"/>
    <lineage>
        <taxon>Bacteria</taxon>
        <taxon>Pseudomonadati</taxon>
        <taxon>Pseudomonadota</taxon>
        <taxon>Alphaproteobacteria</taxon>
        <taxon>Rhodobacterales</taxon>
        <taxon>Paracoccaceae</taxon>
        <taxon>Cereibacter</taxon>
    </lineage>
</organism>
<evidence type="ECO:0000255" key="1">
    <source>
        <dbReference type="HAMAP-Rule" id="MF_00268"/>
    </source>
</evidence>
<evidence type="ECO:0000305" key="2"/>
<dbReference type="EMBL" id="X72705">
    <property type="protein sequence ID" value="CAA51258.1"/>
    <property type="molecule type" value="Genomic_DNA"/>
</dbReference>
<dbReference type="EMBL" id="CP000143">
    <property type="protein sequence ID" value="ABA79624.1"/>
    <property type="status" value="ALT_INIT"/>
    <property type="molecule type" value="Genomic_DNA"/>
</dbReference>
<dbReference type="PIR" id="S41560">
    <property type="entry name" value="S41560"/>
</dbReference>
<dbReference type="RefSeq" id="YP_353525.1">
    <property type="nucleotide sequence ID" value="NC_007493.2"/>
</dbReference>
<dbReference type="SMR" id="P32725"/>
<dbReference type="STRING" id="272943.RSP_0452"/>
<dbReference type="EnsemblBacteria" id="ABA79624">
    <property type="protein sequence ID" value="ABA79624"/>
    <property type="gene ID" value="RSP_0452"/>
</dbReference>
<dbReference type="KEGG" id="rsp:RSP_0452"/>
<dbReference type="PATRIC" id="fig|272943.9.peg.2401"/>
<dbReference type="eggNOG" id="COG0468">
    <property type="taxonomic scope" value="Bacteria"/>
</dbReference>
<dbReference type="OrthoDB" id="9776733at2"/>
<dbReference type="Proteomes" id="UP000002703">
    <property type="component" value="Chromosome 1"/>
</dbReference>
<dbReference type="GO" id="GO:0005829">
    <property type="term" value="C:cytosol"/>
    <property type="evidence" value="ECO:0007669"/>
    <property type="project" value="TreeGrafter"/>
</dbReference>
<dbReference type="GO" id="GO:0005524">
    <property type="term" value="F:ATP binding"/>
    <property type="evidence" value="ECO:0007669"/>
    <property type="project" value="UniProtKB-UniRule"/>
</dbReference>
<dbReference type="GO" id="GO:0016887">
    <property type="term" value="F:ATP hydrolysis activity"/>
    <property type="evidence" value="ECO:0007669"/>
    <property type="project" value="InterPro"/>
</dbReference>
<dbReference type="GO" id="GO:0140664">
    <property type="term" value="F:ATP-dependent DNA damage sensor activity"/>
    <property type="evidence" value="ECO:0007669"/>
    <property type="project" value="InterPro"/>
</dbReference>
<dbReference type="GO" id="GO:0003684">
    <property type="term" value="F:damaged DNA binding"/>
    <property type="evidence" value="ECO:0007669"/>
    <property type="project" value="UniProtKB-UniRule"/>
</dbReference>
<dbReference type="GO" id="GO:0003697">
    <property type="term" value="F:single-stranded DNA binding"/>
    <property type="evidence" value="ECO:0007669"/>
    <property type="project" value="UniProtKB-UniRule"/>
</dbReference>
<dbReference type="GO" id="GO:0006310">
    <property type="term" value="P:DNA recombination"/>
    <property type="evidence" value="ECO:0007669"/>
    <property type="project" value="UniProtKB-UniRule"/>
</dbReference>
<dbReference type="GO" id="GO:0006281">
    <property type="term" value="P:DNA repair"/>
    <property type="evidence" value="ECO:0007669"/>
    <property type="project" value="UniProtKB-UniRule"/>
</dbReference>
<dbReference type="GO" id="GO:0009432">
    <property type="term" value="P:SOS response"/>
    <property type="evidence" value="ECO:0007669"/>
    <property type="project" value="UniProtKB-UniRule"/>
</dbReference>
<dbReference type="CDD" id="cd00983">
    <property type="entry name" value="RecA"/>
    <property type="match status" value="1"/>
</dbReference>
<dbReference type="FunFam" id="3.40.50.300:FF:000087">
    <property type="entry name" value="Recombinase RecA"/>
    <property type="match status" value="1"/>
</dbReference>
<dbReference type="Gene3D" id="3.40.50.300">
    <property type="entry name" value="P-loop containing nucleotide triphosphate hydrolases"/>
    <property type="match status" value="1"/>
</dbReference>
<dbReference type="HAMAP" id="MF_00268">
    <property type="entry name" value="RecA"/>
    <property type="match status" value="1"/>
</dbReference>
<dbReference type="InterPro" id="IPR003593">
    <property type="entry name" value="AAA+_ATPase"/>
</dbReference>
<dbReference type="InterPro" id="IPR013765">
    <property type="entry name" value="DNA_recomb/repair_RecA"/>
</dbReference>
<dbReference type="InterPro" id="IPR020584">
    <property type="entry name" value="DNA_recomb/repair_RecA_CS"/>
</dbReference>
<dbReference type="InterPro" id="IPR027417">
    <property type="entry name" value="P-loop_NTPase"/>
</dbReference>
<dbReference type="InterPro" id="IPR049261">
    <property type="entry name" value="RecA-like_C"/>
</dbReference>
<dbReference type="InterPro" id="IPR049428">
    <property type="entry name" value="RecA-like_N"/>
</dbReference>
<dbReference type="InterPro" id="IPR020588">
    <property type="entry name" value="RecA_ATP-bd"/>
</dbReference>
<dbReference type="InterPro" id="IPR023400">
    <property type="entry name" value="RecA_C_sf"/>
</dbReference>
<dbReference type="InterPro" id="IPR020587">
    <property type="entry name" value="RecA_monomer-monomer_interface"/>
</dbReference>
<dbReference type="NCBIfam" id="TIGR02012">
    <property type="entry name" value="tigrfam_recA"/>
    <property type="match status" value="1"/>
</dbReference>
<dbReference type="PANTHER" id="PTHR45900:SF1">
    <property type="entry name" value="MITOCHONDRIAL DNA REPAIR PROTEIN RECA HOMOLOG-RELATED"/>
    <property type="match status" value="1"/>
</dbReference>
<dbReference type="PANTHER" id="PTHR45900">
    <property type="entry name" value="RECA"/>
    <property type="match status" value="1"/>
</dbReference>
<dbReference type="Pfam" id="PF00154">
    <property type="entry name" value="RecA"/>
    <property type="match status" value="1"/>
</dbReference>
<dbReference type="Pfam" id="PF21096">
    <property type="entry name" value="RecA_C"/>
    <property type="match status" value="1"/>
</dbReference>
<dbReference type="PRINTS" id="PR00142">
    <property type="entry name" value="RECA"/>
</dbReference>
<dbReference type="SMART" id="SM00382">
    <property type="entry name" value="AAA"/>
    <property type="match status" value="1"/>
</dbReference>
<dbReference type="SUPFAM" id="SSF52540">
    <property type="entry name" value="P-loop containing nucleoside triphosphate hydrolases"/>
    <property type="match status" value="1"/>
</dbReference>
<dbReference type="SUPFAM" id="SSF54752">
    <property type="entry name" value="RecA protein, C-terminal domain"/>
    <property type="match status" value="1"/>
</dbReference>
<dbReference type="PROSITE" id="PS00321">
    <property type="entry name" value="RECA_1"/>
    <property type="match status" value="1"/>
</dbReference>
<dbReference type="PROSITE" id="PS50162">
    <property type="entry name" value="RECA_2"/>
    <property type="match status" value="1"/>
</dbReference>
<dbReference type="PROSITE" id="PS50163">
    <property type="entry name" value="RECA_3"/>
    <property type="match status" value="1"/>
</dbReference>